<evidence type="ECO:0000255" key="1">
    <source>
        <dbReference type="HAMAP-Rule" id="MF_00384"/>
    </source>
</evidence>
<comment type="function">
    <text evidence="1">Catalyzes the ATP-dependent phosphorylation of L-homoserine to L-homoserine phosphate.</text>
</comment>
<comment type="catalytic activity">
    <reaction evidence="1">
        <text>L-homoserine + ATP = O-phospho-L-homoserine + ADP + H(+)</text>
        <dbReference type="Rhea" id="RHEA:13985"/>
        <dbReference type="ChEBI" id="CHEBI:15378"/>
        <dbReference type="ChEBI" id="CHEBI:30616"/>
        <dbReference type="ChEBI" id="CHEBI:57476"/>
        <dbReference type="ChEBI" id="CHEBI:57590"/>
        <dbReference type="ChEBI" id="CHEBI:456216"/>
        <dbReference type="EC" id="2.7.1.39"/>
    </reaction>
</comment>
<comment type="pathway">
    <text evidence="1">Amino-acid biosynthesis; L-threonine biosynthesis; L-threonine from L-aspartate: step 4/5.</text>
</comment>
<comment type="subcellular location">
    <subcellularLocation>
        <location evidence="1">Cytoplasm</location>
    </subcellularLocation>
</comment>
<comment type="similarity">
    <text evidence="1">Belongs to the GHMP kinase family. Homoserine kinase subfamily.</text>
</comment>
<sequence>MVEVRVPATSANIGPGFDCLGVAVNMYNKFFVEEIEEGLIFEGCADKFKNENNLIYVAMKKCFDKIGYKPTGLRIKIESDIPVSRGLGSSAACVVGGIVSANELAGGALNKKELLDLAVEVEGHPDNVNPAFCGGMTASISDNREVIYSKVKVSEGIKFCALIPDFTLSTEKARAVLPKSIDYKDGIFNVGRTALMISALNNGDFHLIKYACKDKLHQDYRAKLIENFYSIKKQCEKLNSLGVFLSGAGPTIMVMLREEDKDFSKNIKSFLETLKNKWEVRELKIDKLGTVVNNCKV</sequence>
<gene>
    <name evidence="1" type="primary">thrB</name>
    <name type="ordered locus">CLB_1656</name>
</gene>
<accession>A7FUE5</accession>
<name>KHSE_CLOB1</name>
<dbReference type="EC" id="2.7.1.39" evidence="1"/>
<dbReference type="EMBL" id="CP000726">
    <property type="protein sequence ID" value="ABS34291.1"/>
    <property type="molecule type" value="Genomic_DNA"/>
</dbReference>
<dbReference type="RefSeq" id="WP_011986279.1">
    <property type="nucleotide sequence ID" value="NC_009697.1"/>
</dbReference>
<dbReference type="SMR" id="A7FUE5"/>
<dbReference type="GeneID" id="5185894"/>
<dbReference type="KEGG" id="cba:CLB_1656"/>
<dbReference type="HOGENOM" id="CLU_041243_0_2_9"/>
<dbReference type="UniPathway" id="UPA00050">
    <property type="reaction ID" value="UER00064"/>
</dbReference>
<dbReference type="GO" id="GO:0005737">
    <property type="term" value="C:cytoplasm"/>
    <property type="evidence" value="ECO:0007669"/>
    <property type="project" value="UniProtKB-SubCell"/>
</dbReference>
<dbReference type="GO" id="GO:0005524">
    <property type="term" value="F:ATP binding"/>
    <property type="evidence" value="ECO:0007669"/>
    <property type="project" value="UniProtKB-UniRule"/>
</dbReference>
<dbReference type="GO" id="GO:0004413">
    <property type="term" value="F:homoserine kinase activity"/>
    <property type="evidence" value="ECO:0007669"/>
    <property type="project" value="UniProtKB-UniRule"/>
</dbReference>
<dbReference type="GO" id="GO:0009088">
    <property type="term" value="P:threonine biosynthetic process"/>
    <property type="evidence" value="ECO:0007669"/>
    <property type="project" value="UniProtKB-UniRule"/>
</dbReference>
<dbReference type="Gene3D" id="3.30.230.10">
    <property type="match status" value="1"/>
</dbReference>
<dbReference type="Gene3D" id="3.30.70.890">
    <property type="entry name" value="GHMP kinase, C-terminal domain"/>
    <property type="match status" value="1"/>
</dbReference>
<dbReference type="HAMAP" id="MF_00384">
    <property type="entry name" value="Homoser_kinase"/>
    <property type="match status" value="1"/>
</dbReference>
<dbReference type="InterPro" id="IPR013750">
    <property type="entry name" value="GHMP_kinase_C_dom"/>
</dbReference>
<dbReference type="InterPro" id="IPR036554">
    <property type="entry name" value="GHMP_kinase_C_sf"/>
</dbReference>
<dbReference type="InterPro" id="IPR006204">
    <property type="entry name" value="GHMP_kinase_N_dom"/>
</dbReference>
<dbReference type="InterPro" id="IPR006203">
    <property type="entry name" value="GHMP_knse_ATP-bd_CS"/>
</dbReference>
<dbReference type="InterPro" id="IPR000870">
    <property type="entry name" value="Homoserine_kinase"/>
</dbReference>
<dbReference type="InterPro" id="IPR020568">
    <property type="entry name" value="Ribosomal_Su5_D2-typ_SF"/>
</dbReference>
<dbReference type="InterPro" id="IPR014721">
    <property type="entry name" value="Ribsml_uS5_D2-typ_fold_subgr"/>
</dbReference>
<dbReference type="NCBIfam" id="NF002288">
    <property type="entry name" value="PRK01212.1-4"/>
    <property type="match status" value="1"/>
</dbReference>
<dbReference type="NCBIfam" id="TIGR00191">
    <property type="entry name" value="thrB"/>
    <property type="match status" value="1"/>
</dbReference>
<dbReference type="PANTHER" id="PTHR20861:SF1">
    <property type="entry name" value="HOMOSERINE KINASE"/>
    <property type="match status" value="1"/>
</dbReference>
<dbReference type="PANTHER" id="PTHR20861">
    <property type="entry name" value="HOMOSERINE/4-DIPHOSPHOCYTIDYL-2-C-METHYL-D-ERYTHRITOL KINASE"/>
    <property type="match status" value="1"/>
</dbReference>
<dbReference type="Pfam" id="PF08544">
    <property type="entry name" value="GHMP_kinases_C"/>
    <property type="match status" value="1"/>
</dbReference>
<dbReference type="Pfam" id="PF00288">
    <property type="entry name" value="GHMP_kinases_N"/>
    <property type="match status" value="1"/>
</dbReference>
<dbReference type="PIRSF" id="PIRSF000676">
    <property type="entry name" value="Homoser_kin"/>
    <property type="match status" value="1"/>
</dbReference>
<dbReference type="PRINTS" id="PR00958">
    <property type="entry name" value="HOMSERKINASE"/>
</dbReference>
<dbReference type="SUPFAM" id="SSF55060">
    <property type="entry name" value="GHMP Kinase, C-terminal domain"/>
    <property type="match status" value="1"/>
</dbReference>
<dbReference type="SUPFAM" id="SSF54211">
    <property type="entry name" value="Ribosomal protein S5 domain 2-like"/>
    <property type="match status" value="1"/>
</dbReference>
<dbReference type="PROSITE" id="PS00627">
    <property type="entry name" value="GHMP_KINASES_ATP"/>
    <property type="match status" value="1"/>
</dbReference>
<keyword id="KW-0028">Amino-acid biosynthesis</keyword>
<keyword id="KW-0067">ATP-binding</keyword>
<keyword id="KW-0963">Cytoplasm</keyword>
<keyword id="KW-0418">Kinase</keyword>
<keyword id="KW-0547">Nucleotide-binding</keyword>
<keyword id="KW-0791">Threonine biosynthesis</keyword>
<keyword id="KW-0808">Transferase</keyword>
<reference key="1">
    <citation type="journal article" date="2007" name="PLoS ONE">
        <title>Analysis of the neurotoxin complex genes in Clostridium botulinum A1-A4 and B1 strains: BoNT/A3, /Ba4 and /B1 clusters are located within plasmids.</title>
        <authorList>
            <person name="Smith T.J."/>
            <person name="Hill K.K."/>
            <person name="Foley B.T."/>
            <person name="Detter J.C."/>
            <person name="Munk A.C."/>
            <person name="Bruce D.C."/>
            <person name="Doggett N.A."/>
            <person name="Smith L.A."/>
            <person name="Marks J.D."/>
            <person name="Xie G."/>
            <person name="Brettin T.S."/>
        </authorList>
    </citation>
    <scope>NUCLEOTIDE SEQUENCE [LARGE SCALE GENOMIC DNA]</scope>
    <source>
        <strain>ATCC 19397 / Type A</strain>
    </source>
</reference>
<feature type="chain" id="PRO_1000049122" description="Homoserine kinase">
    <location>
        <begin position="1"/>
        <end position="297"/>
    </location>
</feature>
<feature type="binding site" evidence="1">
    <location>
        <begin position="82"/>
        <end position="92"/>
    </location>
    <ligand>
        <name>ATP</name>
        <dbReference type="ChEBI" id="CHEBI:30616"/>
    </ligand>
</feature>
<proteinExistence type="inferred from homology"/>
<organism>
    <name type="scientific">Clostridium botulinum (strain ATCC 19397 / Type A)</name>
    <dbReference type="NCBI Taxonomy" id="441770"/>
    <lineage>
        <taxon>Bacteria</taxon>
        <taxon>Bacillati</taxon>
        <taxon>Bacillota</taxon>
        <taxon>Clostridia</taxon>
        <taxon>Eubacteriales</taxon>
        <taxon>Clostridiaceae</taxon>
        <taxon>Clostridium</taxon>
    </lineage>
</organism>
<protein>
    <recommendedName>
        <fullName evidence="1">Homoserine kinase</fullName>
        <shortName evidence="1">HK</shortName>
        <shortName evidence="1">HSK</shortName>
        <ecNumber evidence="1">2.7.1.39</ecNumber>
    </recommendedName>
</protein>